<keyword id="KW-0472">Membrane</keyword>
<keyword id="KW-0520">NAD</keyword>
<keyword id="KW-0874">Quinone</keyword>
<keyword id="KW-1278">Translocase</keyword>
<keyword id="KW-0812">Transmembrane</keyword>
<keyword id="KW-1133">Transmembrane helix</keyword>
<keyword id="KW-0830">Ubiquinone</keyword>
<sequence length="712" mass="77532">MTTIILLAPLLGALIGGFGWRLITEKGALVVTTGLLFLSCILSWVVFLTLPAETQHIHLLDWIRSGALDTSWGIRLDRLTAIMLIVVTTVSALVHLYSWGYMAHDENWTHHEAYKARFFAYLSFFTFAMLMLVTSDNLVQMFFGWEGVGVASYLLIGFYYKKPSANAAAIKAFVVNRVGDFGFALGIMGLFFLTDSIDMDVIFASAPELAKTELHFLAWEFNAANLLAVLLFIGAMGKSAQLFLHTWLPDAMEGPTPVSALIHAATMVTAGVFLVCRMSPLFEYAPEAKMMVVYVGAVTAFFAATVGLVQNDIKRVIAYSTCSQLGYMFVAAGSGVYSVAMFHLLTHAFFKAMLFLGAGSVIHAMHHEQDMRNYGGLRKKIPFTFAIMMIGTLAITGVGIPFFSIGGVPVGFAGYLSKDAIIESAFASGNGFAFYVLVAAAGMTSFYSWRLIFLTFYGEARGDHHKHDHAHESPAVMLAPLALLAVGSVLAGMVWYHSFFGDKVASFFNLPAAAHGEAHGTEHATEGHVPEAAMTAEAAHEAAMAGTMAMAEPAAEHAVAKAPQGAIFMAETNHVIHDAHGVPDWVKLSPFGAMVTGFFFAWLYYIGDKPLPGRTARALPGLYRFLLNKWYFDELFDLLFVNPAKSLGRKLWKGGDGAVIDGAINGLALGWIPFFTRVAGRIQSGYLFHYAFAMVLGIVALMFWVVRTGGMN</sequence>
<gene>
    <name type="primary">nuoL</name>
</gene>
<dbReference type="EC" id="7.1.1.-"/>
<dbReference type="EMBL" id="AF029365">
    <property type="protein sequence ID" value="AAC25003.1"/>
    <property type="molecule type" value="Genomic_DNA"/>
</dbReference>
<dbReference type="RefSeq" id="WP_013067259.1">
    <property type="nucleotide sequence ID" value="NZ_VIBE01000008.1"/>
</dbReference>
<dbReference type="SMR" id="P50939"/>
<dbReference type="GeneID" id="31490415"/>
<dbReference type="OMA" id="LIGFWQH"/>
<dbReference type="GO" id="GO:0042717">
    <property type="term" value="C:plasma membrane-derived chromatophore membrane"/>
    <property type="evidence" value="ECO:0007669"/>
    <property type="project" value="UniProtKB-SubCell"/>
</dbReference>
<dbReference type="GO" id="GO:0008137">
    <property type="term" value="F:NADH dehydrogenase (ubiquinone) activity"/>
    <property type="evidence" value="ECO:0007669"/>
    <property type="project" value="InterPro"/>
</dbReference>
<dbReference type="GO" id="GO:0048038">
    <property type="term" value="F:quinone binding"/>
    <property type="evidence" value="ECO:0007669"/>
    <property type="project" value="UniProtKB-KW"/>
</dbReference>
<dbReference type="GO" id="GO:0042773">
    <property type="term" value="P:ATP synthesis coupled electron transport"/>
    <property type="evidence" value="ECO:0007669"/>
    <property type="project" value="InterPro"/>
</dbReference>
<dbReference type="GO" id="GO:0015990">
    <property type="term" value="P:electron transport coupled proton transport"/>
    <property type="evidence" value="ECO:0007669"/>
    <property type="project" value="TreeGrafter"/>
</dbReference>
<dbReference type="Gene3D" id="1.20.5.2700">
    <property type="match status" value="1"/>
</dbReference>
<dbReference type="InterPro" id="IPR018393">
    <property type="entry name" value="NADHpl_OxRdtase_5_subgr"/>
</dbReference>
<dbReference type="InterPro" id="IPR001750">
    <property type="entry name" value="ND/Mrp_TM"/>
</dbReference>
<dbReference type="InterPro" id="IPR003945">
    <property type="entry name" value="NU5C-like"/>
</dbReference>
<dbReference type="InterPro" id="IPR001516">
    <property type="entry name" value="Proton_antipo_N"/>
</dbReference>
<dbReference type="NCBIfam" id="TIGR01974">
    <property type="entry name" value="NDH_I_L"/>
    <property type="match status" value="1"/>
</dbReference>
<dbReference type="NCBIfam" id="NF005141">
    <property type="entry name" value="PRK06590.1"/>
    <property type="match status" value="1"/>
</dbReference>
<dbReference type="PANTHER" id="PTHR42829">
    <property type="entry name" value="NADH-UBIQUINONE OXIDOREDUCTASE CHAIN 5"/>
    <property type="match status" value="1"/>
</dbReference>
<dbReference type="PANTHER" id="PTHR42829:SF2">
    <property type="entry name" value="NADH-UBIQUINONE OXIDOREDUCTASE CHAIN 5"/>
    <property type="match status" value="1"/>
</dbReference>
<dbReference type="Pfam" id="PF00361">
    <property type="entry name" value="Proton_antipo_M"/>
    <property type="match status" value="1"/>
</dbReference>
<dbReference type="Pfam" id="PF00662">
    <property type="entry name" value="Proton_antipo_N"/>
    <property type="match status" value="1"/>
</dbReference>
<dbReference type="PRINTS" id="PR01434">
    <property type="entry name" value="NADHDHGNASE5"/>
</dbReference>
<dbReference type="PRINTS" id="PR01435">
    <property type="entry name" value="NPOXDRDTASE5"/>
</dbReference>
<comment type="function">
    <text>NDH-1 shuttles electrons from NADH, via FMN and iron-sulfur (Fe-S) centers, to quinones in the respiratory chain. The immediate electron acceptor for the enzyme in this species is believed to be ubiquinone. Couples the redox reaction to proton translocation (for every two electrons transferred, four hydrogen ions are translocated across the cytoplasmic membrane), and thus conserves the redox energy in a proton gradient.</text>
</comment>
<comment type="catalytic activity">
    <reaction>
        <text>a quinone + NADH + 5 H(+)(in) = a quinol + NAD(+) + 4 H(+)(out)</text>
        <dbReference type="Rhea" id="RHEA:57888"/>
        <dbReference type="ChEBI" id="CHEBI:15378"/>
        <dbReference type="ChEBI" id="CHEBI:24646"/>
        <dbReference type="ChEBI" id="CHEBI:57540"/>
        <dbReference type="ChEBI" id="CHEBI:57945"/>
        <dbReference type="ChEBI" id="CHEBI:132124"/>
    </reaction>
</comment>
<comment type="subunit">
    <text evidence="4">NDH-1 is composed of 14 different subunits. Subunits NuoA, H, J, K, L, M, N constitute the membrane sector of the complex (Probable).</text>
</comment>
<comment type="subcellular location">
    <subcellularLocation>
        <location evidence="2">Cellular chromatophore membrane</location>
        <topology evidence="2">Multi-pass membrane protein</topology>
    </subcellularLocation>
</comment>
<comment type="disruption phenotype">
    <text evidence="3">No functional NADH-quinone oxidoreductase complex. Cells lacking this gene have a nearly normal respiratory growth phenotype on lactate, however they are unable to perform anaerobic photosynthesis. It is suggested that in R.capsulatus this complex may function in reverse flow under physiological conditions.</text>
</comment>
<comment type="similarity">
    <text evidence="4">Belongs to the complex I subunit 5 family.</text>
</comment>
<name>NUOL_RHOCA</name>
<organism>
    <name type="scientific">Rhodobacter capsulatus</name>
    <name type="common">Rhodopseudomonas capsulata</name>
    <dbReference type="NCBI Taxonomy" id="1061"/>
    <lineage>
        <taxon>Bacteria</taxon>
        <taxon>Pseudomonadati</taxon>
        <taxon>Pseudomonadota</taxon>
        <taxon>Alphaproteobacteria</taxon>
        <taxon>Rhodobacterales</taxon>
        <taxon>Rhodobacter group</taxon>
        <taxon>Rhodobacter</taxon>
    </lineage>
</organism>
<reference key="1">
    <citation type="journal article" date="1995" name="Gene">
        <title>Identification of five Rhodobacter capsulatus genes encoding the equivalent of ND subunits of the mitochondrial NADH-ubiquinone oxidoreductase.</title>
        <authorList>
            <person name="Dupuis A."/>
            <person name="Peinnequin A."/>
            <person name="Chevallet M."/>
            <person name="Lunardi J."/>
            <person name="Darrouzet E."/>
            <person name="Pierrard B."/>
            <person name="Procaccio V."/>
            <person name="Issartel J.P."/>
        </authorList>
    </citation>
    <scope>NUCLEOTIDE SEQUENCE [GENOMIC DNA]</scope>
    <source>
        <strain>ATCC 33303 / B10</strain>
    </source>
</reference>
<reference key="2">
    <citation type="submission" date="1997-10" db="EMBL/GenBank/DDBJ databases">
        <authorList>
            <person name="Dupuis A."/>
            <person name="Issartel J.P."/>
        </authorList>
    </citation>
    <scope>SEQUENCE REVISION TO C-TERMINUS</scope>
</reference>
<reference key="3">
    <citation type="journal article" date="1997" name="FEMS Microbiol. Lett.">
        <title>Genetic disruption of the respiratory NADH-ubiquinone reductase of Rhodobacter capsulatus leads to an unexpected photosynthesis-negative phenotype.</title>
        <authorList>
            <person name="Dupuis A."/>
            <person name="Peinnequin A."/>
            <person name="Darrouzet E."/>
            <person name="Lunardi J."/>
        </authorList>
    </citation>
    <scope>DISRUPTION PHENOTYPE</scope>
    <source>
        <strain>ATCC 33303 / B10</strain>
    </source>
</reference>
<reference key="4">
    <citation type="journal article" date="1998" name="Mol. Microbiol.">
        <title>Distal genes of the nuo operon of Rhodobacter capsulatus equivalent to the mitochondrial ND subunits are all essential for the biogenesis of the respiratory NADH-ubiquinone oxidoreductase.</title>
        <authorList>
            <person name="Dupuis A."/>
            <person name="Darrouzet E."/>
            <person name="Duborjal H."/>
            <person name="Pierrard B."/>
            <person name="Chevallet M."/>
            <person name="van Belzen R."/>
            <person name="Albracht S.P.J."/>
            <person name="Lunardi J."/>
        </authorList>
    </citation>
    <scope>SUBCELLULAR LOCATION IN CHROMATOPHORE</scope>
    <source>
        <strain>ATCC 33303 / B10</strain>
    </source>
</reference>
<evidence type="ECO:0000255" key="1"/>
<evidence type="ECO:0000269" key="2">
    <source>
    </source>
</evidence>
<evidence type="ECO:0000269" key="3">
    <source ref="3"/>
</evidence>
<evidence type="ECO:0000305" key="4"/>
<protein>
    <recommendedName>
        <fullName>NADH-quinone oxidoreductase subunit L</fullName>
        <ecNumber>7.1.1.-</ecNumber>
    </recommendedName>
    <alternativeName>
        <fullName>NADH dehydrogenase I subunit L</fullName>
    </alternativeName>
    <alternativeName>
        <fullName>NDH-1 subunit L</fullName>
    </alternativeName>
</protein>
<accession>P50939</accession>
<proteinExistence type="inferred from homology"/>
<feature type="chain" id="PRO_0000118221" description="NADH-quinone oxidoreductase subunit L">
    <location>
        <begin position="1"/>
        <end position="712"/>
    </location>
</feature>
<feature type="transmembrane region" description="Helical" evidence="1">
    <location>
        <begin position="4"/>
        <end position="24"/>
    </location>
</feature>
<feature type="transmembrane region" description="Helical" evidence="1">
    <location>
        <begin position="28"/>
        <end position="48"/>
    </location>
</feature>
<feature type="transmembrane region" description="Helical" evidence="1">
    <location>
        <begin position="79"/>
        <end position="99"/>
    </location>
</feature>
<feature type="transmembrane region" description="Helical" evidence="1">
    <location>
        <begin position="113"/>
        <end position="133"/>
    </location>
</feature>
<feature type="transmembrane region" description="Helical" evidence="1">
    <location>
        <begin position="138"/>
        <end position="158"/>
    </location>
</feature>
<feature type="transmembrane region" description="Helical" evidence="1">
    <location>
        <begin position="183"/>
        <end position="203"/>
    </location>
</feature>
<feature type="transmembrane region" description="Helical" evidence="1">
    <location>
        <begin position="216"/>
        <end position="236"/>
    </location>
</feature>
<feature type="transmembrane region" description="Helical" evidence="1">
    <location>
        <begin position="256"/>
        <end position="276"/>
    </location>
</feature>
<feature type="transmembrane region" description="Helical" evidence="1">
    <location>
        <begin position="290"/>
        <end position="310"/>
    </location>
</feature>
<feature type="transmembrane region" description="Helical" evidence="1">
    <location>
        <begin position="325"/>
        <end position="345"/>
    </location>
</feature>
<feature type="transmembrane region" description="Helical" evidence="1">
    <location>
        <begin position="346"/>
        <end position="366"/>
    </location>
</feature>
<feature type="transmembrane region" description="Helical" evidence="1">
    <location>
        <begin position="385"/>
        <end position="405"/>
    </location>
</feature>
<feature type="transmembrane region" description="Helical" evidence="1">
    <location>
        <begin position="421"/>
        <end position="441"/>
    </location>
</feature>
<feature type="transmembrane region" description="Helical" evidence="1">
    <location>
        <begin position="475"/>
        <end position="495"/>
    </location>
</feature>
<feature type="transmembrane region" description="Helical" evidence="1">
    <location>
        <begin position="588"/>
        <end position="608"/>
    </location>
</feature>
<feature type="transmembrane region" description="Helical" evidence="1">
    <location>
        <begin position="655"/>
        <end position="675"/>
    </location>
</feature>
<feature type="transmembrane region" description="Helical" evidence="1">
    <location>
        <begin position="686"/>
        <end position="706"/>
    </location>
</feature>